<dbReference type="EMBL" id="CP000235">
    <property type="protein sequence ID" value="ABD43499.1"/>
    <property type="molecule type" value="Genomic_DNA"/>
</dbReference>
<dbReference type="RefSeq" id="WP_011450207.1">
    <property type="nucleotide sequence ID" value="NC_007797.1"/>
</dbReference>
<dbReference type="SMR" id="Q2GLS0"/>
<dbReference type="STRING" id="212042.APH_0047"/>
<dbReference type="PaxDb" id="212042-APH_0047"/>
<dbReference type="EnsemblBacteria" id="ABD43499">
    <property type="protein sequence ID" value="ABD43499"/>
    <property type="gene ID" value="APH_0047"/>
</dbReference>
<dbReference type="KEGG" id="aph:APH_0047"/>
<dbReference type="PATRIC" id="fig|212042.8.peg.48"/>
<dbReference type="eggNOG" id="COG1327">
    <property type="taxonomic scope" value="Bacteria"/>
</dbReference>
<dbReference type="HOGENOM" id="CLU_108412_0_1_5"/>
<dbReference type="Proteomes" id="UP000001943">
    <property type="component" value="Chromosome"/>
</dbReference>
<dbReference type="GO" id="GO:0005524">
    <property type="term" value="F:ATP binding"/>
    <property type="evidence" value="ECO:0007669"/>
    <property type="project" value="UniProtKB-KW"/>
</dbReference>
<dbReference type="GO" id="GO:0003677">
    <property type="term" value="F:DNA binding"/>
    <property type="evidence" value="ECO:0007669"/>
    <property type="project" value="UniProtKB-KW"/>
</dbReference>
<dbReference type="GO" id="GO:0008270">
    <property type="term" value="F:zinc ion binding"/>
    <property type="evidence" value="ECO:0007669"/>
    <property type="project" value="UniProtKB-UniRule"/>
</dbReference>
<dbReference type="GO" id="GO:0045892">
    <property type="term" value="P:negative regulation of DNA-templated transcription"/>
    <property type="evidence" value="ECO:0007669"/>
    <property type="project" value="UniProtKB-UniRule"/>
</dbReference>
<dbReference type="HAMAP" id="MF_00440">
    <property type="entry name" value="NrdR"/>
    <property type="match status" value="1"/>
</dbReference>
<dbReference type="InterPro" id="IPR005144">
    <property type="entry name" value="ATP-cone_dom"/>
</dbReference>
<dbReference type="InterPro" id="IPR055173">
    <property type="entry name" value="NrdR-like_N"/>
</dbReference>
<dbReference type="InterPro" id="IPR003796">
    <property type="entry name" value="RNR_NrdR-like"/>
</dbReference>
<dbReference type="NCBIfam" id="TIGR00244">
    <property type="entry name" value="transcriptional regulator NrdR"/>
    <property type="match status" value="1"/>
</dbReference>
<dbReference type="PANTHER" id="PTHR30455">
    <property type="entry name" value="TRANSCRIPTIONAL REPRESSOR NRDR"/>
    <property type="match status" value="1"/>
</dbReference>
<dbReference type="PANTHER" id="PTHR30455:SF2">
    <property type="entry name" value="TRANSCRIPTIONAL REPRESSOR NRDR"/>
    <property type="match status" value="1"/>
</dbReference>
<dbReference type="Pfam" id="PF03477">
    <property type="entry name" value="ATP-cone"/>
    <property type="match status" value="1"/>
</dbReference>
<dbReference type="Pfam" id="PF22811">
    <property type="entry name" value="Zn_ribbon_NrdR"/>
    <property type="match status" value="1"/>
</dbReference>
<dbReference type="PROSITE" id="PS51161">
    <property type="entry name" value="ATP_CONE"/>
    <property type="match status" value="1"/>
</dbReference>
<comment type="function">
    <text evidence="1">Negatively regulates transcription of bacterial ribonucleotide reductase nrd genes and operons by binding to NrdR-boxes.</text>
</comment>
<comment type="cofactor">
    <cofactor evidence="1">
        <name>Zn(2+)</name>
        <dbReference type="ChEBI" id="CHEBI:29105"/>
    </cofactor>
    <text evidence="1">Binds 1 zinc ion.</text>
</comment>
<comment type="similarity">
    <text evidence="1">Belongs to the NrdR family.</text>
</comment>
<protein>
    <recommendedName>
        <fullName evidence="1">Transcriptional repressor NrdR</fullName>
    </recommendedName>
</protein>
<evidence type="ECO:0000255" key="1">
    <source>
        <dbReference type="HAMAP-Rule" id="MF_00440"/>
    </source>
</evidence>
<evidence type="ECO:0000256" key="2">
    <source>
        <dbReference type="SAM" id="MobiDB-lite"/>
    </source>
</evidence>
<accession>Q2GLS0</accession>
<reference key="1">
    <citation type="journal article" date="2006" name="PLoS Genet.">
        <title>Comparative genomics of emerging human ehrlichiosis agents.</title>
        <authorList>
            <person name="Dunning Hotopp J.C."/>
            <person name="Lin M."/>
            <person name="Madupu R."/>
            <person name="Crabtree J."/>
            <person name="Angiuoli S.V."/>
            <person name="Eisen J.A."/>
            <person name="Seshadri R."/>
            <person name="Ren Q."/>
            <person name="Wu M."/>
            <person name="Utterback T.R."/>
            <person name="Smith S."/>
            <person name="Lewis M."/>
            <person name="Khouri H."/>
            <person name="Zhang C."/>
            <person name="Niu H."/>
            <person name="Lin Q."/>
            <person name="Ohashi N."/>
            <person name="Zhi N."/>
            <person name="Nelson W.C."/>
            <person name="Brinkac L.M."/>
            <person name="Dodson R.J."/>
            <person name="Rosovitz M.J."/>
            <person name="Sundaram J.P."/>
            <person name="Daugherty S.C."/>
            <person name="Davidsen T."/>
            <person name="Durkin A.S."/>
            <person name="Gwinn M.L."/>
            <person name="Haft D.H."/>
            <person name="Selengut J.D."/>
            <person name="Sullivan S.A."/>
            <person name="Zafar N."/>
            <person name="Zhou L."/>
            <person name="Benahmed F."/>
            <person name="Forberger H."/>
            <person name="Halpin R."/>
            <person name="Mulligan S."/>
            <person name="Robinson J."/>
            <person name="White O."/>
            <person name="Rikihisa Y."/>
            <person name="Tettelin H."/>
        </authorList>
    </citation>
    <scope>NUCLEOTIDE SEQUENCE [LARGE SCALE GENOMIC DNA]</scope>
    <source>
        <strain>HZ</strain>
    </source>
</reference>
<proteinExistence type="inferred from homology"/>
<organism>
    <name type="scientific">Anaplasma phagocytophilum (strain HZ)</name>
    <dbReference type="NCBI Taxonomy" id="212042"/>
    <lineage>
        <taxon>Bacteria</taxon>
        <taxon>Pseudomonadati</taxon>
        <taxon>Pseudomonadota</taxon>
        <taxon>Alphaproteobacteria</taxon>
        <taxon>Rickettsiales</taxon>
        <taxon>Anaplasmataceae</taxon>
        <taxon>Anaplasma</taxon>
        <taxon>phagocytophilum group</taxon>
    </lineage>
</organism>
<name>NRDR_ANAPZ</name>
<feature type="chain" id="PRO_0000264161" description="Transcriptional repressor NrdR">
    <location>
        <begin position="1"/>
        <end position="153"/>
    </location>
</feature>
<feature type="domain" description="ATP-cone" evidence="1">
    <location>
        <begin position="49"/>
        <end position="139"/>
    </location>
</feature>
<feature type="zinc finger region" evidence="1">
    <location>
        <begin position="3"/>
        <end position="34"/>
    </location>
</feature>
<feature type="region of interest" description="Disordered" evidence="2">
    <location>
        <begin position="1"/>
        <end position="20"/>
    </location>
</feature>
<feature type="compositionally biased region" description="Basic and acidic residues" evidence="2">
    <location>
        <begin position="11"/>
        <end position="20"/>
    </location>
</feature>
<keyword id="KW-0067">ATP-binding</keyword>
<keyword id="KW-0238">DNA-binding</keyword>
<keyword id="KW-0479">Metal-binding</keyword>
<keyword id="KW-0547">Nucleotide-binding</keyword>
<keyword id="KW-0678">Repressor</keyword>
<keyword id="KW-0804">Transcription</keyword>
<keyword id="KW-0805">Transcription regulation</keyword>
<keyword id="KW-0862">Zinc</keyword>
<keyword id="KW-0863">Zinc-finger</keyword>
<sequence>MKCPFCNSADTRVKNSRHSDDNMSVRRRRLCEVCNSRFTTLEELLLKPIMVLKKDGRMEPFDKQKLLTSIMLATNKRPVTHAQINMVLSKILYKFESVKEDVIPARVIGEIVKNNLLVLDKVAYIRFVSVYMDFSDADDFCSLVEKIKEGSDK</sequence>
<gene>
    <name evidence="1" type="primary">nrdR</name>
    <name type="ordered locus">APH_0047</name>
</gene>